<sequence length="295" mass="32225">MNPASTSHATLQGLLRHARQRLEAAEVDAPRLSAEIILCHALSLRRIDIMLTPDRIVEEADCILFSELVARRATGEPLAYIVGEKEFFGRDFAVNPSTLIPRPETEHLIETALESLRSGPARFVDAGTGSGCIAVTLCAERADLSGLALDMSAPALATASHNARRHGVAQRLAFVRGDFTTSLLRSGSLDLYASNPPYISEAEYTGLSREVRDFEPRSALVPGDTGLEHAAAIIAEATRVLRPHGILLMEFGCMQGADMASLFTPYSTLWEMVEVRRDLAGLDRFIFARRNLLQP</sequence>
<name>PRMC_NITV2</name>
<protein>
    <recommendedName>
        <fullName evidence="1">Release factor glutamine methyltransferase</fullName>
        <shortName evidence="1">RF MTase</shortName>
        <ecNumber evidence="1">2.1.1.297</ecNumber>
    </recommendedName>
    <alternativeName>
        <fullName evidence="1">N5-glutamine methyltransferase PrmC</fullName>
    </alternativeName>
    <alternativeName>
        <fullName evidence="1">Protein-(glutamine-N5) MTase PrmC</fullName>
    </alternativeName>
    <alternativeName>
        <fullName evidence="1">Protein-glutamine N-methyltransferase PrmC</fullName>
    </alternativeName>
</protein>
<gene>
    <name evidence="1" type="primary">prmC</name>
    <name type="synonym">hemK</name>
    <name type="ordered locus">DVU_2916</name>
</gene>
<comment type="function">
    <text evidence="1">Methylates the class 1 translation termination release factors RF1/PrfA and RF2/PrfB on the glutamine residue of the universally conserved GGQ motif.</text>
</comment>
<comment type="catalytic activity">
    <reaction evidence="1">
        <text>L-glutaminyl-[peptide chain release factor] + S-adenosyl-L-methionine = N(5)-methyl-L-glutaminyl-[peptide chain release factor] + S-adenosyl-L-homocysteine + H(+)</text>
        <dbReference type="Rhea" id="RHEA:42896"/>
        <dbReference type="Rhea" id="RHEA-COMP:10271"/>
        <dbReference type="Rhea" id="RHEA-COMP:10272"/>
        <dbReference type="ChEBI" id="CHEBI:15378"/>
        <dbReference type="ChEBI" id="CHEBI:30011"/>
        <dbReference type="ChEBI" id="CHEBI:57856"/>
        <dbReference type="ChEBI" id="CHEBI:59789"/>
        <dbReference type="ChEBI" id="CHEBI:61891"/>
        <dbReference type="EC" id="2.1.1.297"/>
    </reaction>
</comment>
<comment type="similarity">
    <text evidence="1">Belongs to the protein N5-glutamine methyltransferase family. PrmC subfamily.</text>
</comment>
<keyword id="KW-0489">Methyltransferase</keyword>
<keyword id="KW-1185">Reference proteome</keyword>
<keyword id="KW-0949">S-adenosyl-L-methionine</keyword>
<keyword id="KW-0808">Transferase</keyword>
<dbReference type="EC" id="2.1.1.297" evidence="1"/>
<dbReference type="EMBL" id="AE017285">
    <property type="protein sequence ID" value="AAS97388.1"/>
    <property type="molecule type" value="Genomic_DNA"/>
</dbReference>
<dbReference type="RefSeq" id="WP_010940176.1">
    <property type="nucleotide sequence ID" value="NC_002937.3"/>
</dbReference>
<dbReference type="RefSeq" id="YP_012128.1">
    <property type="nucleotide sequence ID" value="NC_002937.3"/>
</dbReference>
<dbReference type="SMR" id="Q727D9"/>
<dbReference type="IntAct" id="Q727D9">
    <property type="interactions" value="1"/>
</dbReference>
<dbReference type="STRING" id="882.DVU_2916"/>
<dbReference type="PaxDb" id="882-DVU_2916"/>
<dbReference type="EnsemblBacteria" id="AAS97388">
    <property type="protein sequence ID" value="AAS97388"/>
    <property type="gene ID" value="DVU_2916"/>
</dbReference>
<dbReference type="KEGG" id="dvu:DVU_2916"/>
<dbReference type="PATRIC" id="fig|882.5.peg.2637"/>
<dbReference type="eggNOG" id="COG2890">
    <property type="taxonomic scope" value="Bacteria"/>
</dbReference>
<dbReference type="HOGENOM" id="CLU_018398_3_1_7"/>
<dbReference type="OrthoDB" id="9800643at2"/>
<dbReference type="PhylomeDB" id="Q727D9"/>
<dbReference type="Proteomes" id="UP000002194">
    <property type="component" value="Chromosome"/>
</dbReference>
<dbReference type="GO" id="GO:0102559">
    <property type="term" value="F:protein-(glutamine-N5) methyltransferase activity"/>
    <property type="evidence" value="ECO:0007669"/>
    <property type="project" value="UniProtKB-EC"/>
</dbReference>
<dbReference type="GO" id="GO:0036009">
    <property type="term" value="F:protein-glutamine N-methyltransferase activity"/>
    <property type="evidence" value="ECO:0007669"/>
    <property type="project" value="UniProtKB-UniRule"/>
</dbReference>
<dbReference type="GO" id="GO:0032259">
    <property type="term" value="P:methylation"/>
    <property type="evidence" value="ECO:0007669"/>
    <property type="project" value="UniProtKB-KW"/>
</dbReference>
<dbReference type="CDD" id="cd02440">
    <property type="entry name" value="AdoMet_MTases"/>
    <property type="match status" value="1"/>
</dbReference>
<dbReference type="Gene3D" id="1.10.8.10">
    <property type="entry name" value="DNA helicase RuvA subunit, C-terminal domain"/>
    <property type="match status" value="1"/>
</dbReference>
<dbReference type="Gene3D" id="3.40.50.150">
    <property type="entry name" value="Vaccinia Virus protein VP39"/>
    <property type="match status" value="1"/>
</dbReference>
<dbReference type="HAMAP" id="MF_02126">
    <property type="entry name" value="RF_methyltr_PrmC"/>
    <property type="match status" value="1"/>
</dbReference>
<dbReference type="InterPro" id="IPR004556">
    <property type="entry name" value="HemK-like"/>
</dbReference>
<dbReference type="InterPro" id="IPR050320">
    <property type="entry name" value="N5-glutamine_MTase"/>
</dbReference>
<dbReference type="InterPro" id="IPR040758">
    <property type="entry name" value="PrmC_N"/>
</dbReference>
<dbReference type="InterPro" id="IPR019874">
    <property type="entry name" value="RF_methyltr_PrmC"/>
</dbReference>
<dbReference type="InterPro" id="IPR029063">
    <property type="entry name" value="SAM-dependent_MTases_sf"/>
</dbReference>
<dbReference type="InterPro" id="IPR007848">
    <property type="entry name" value="Small_mtfrase_dom"/>
</dbReference>
<dbReference type="NCBIfam" id="TIGR00536">
    <property type="entry name" value="hemK_fam"/>
    <property type="match status" value="1"/>
</dbReference>
<dbReference type="NCBIfam" id="TIGR03534">
    <property type="entry name" value="RF_mod_PrmC"/>
    <property type="match status" value="1"/>
</dbReference>
<dbReference type="PANTHER" id="PTHR18895">
    <property type="entry name" value="HEMK METHYLTRANSFERASE"/>
    <property type="match status" value="1"/>
</dbReference>
<dbReference type="PANTHER" id="PTHR18895:SF74">
    <property type="entry name" value="MTRF1L RELEASE FACTOR GLUTAMINE METHYLTRANSFERASE"/>
    <property type="match status" value="1"/>
</dbReference>
<dbReference type="Pfam" id="PF05175">
    <property type="entry name" value="MTS"/>
    <property type="match status" value="1"/>
</dbReference>
<dbReference type="Pfam" id="PF17827">
    <property type="entry name" value="PrmC_N"/>
    <property type="match status" value="1"/>
</dbReference>
<dbReference type="SUPFAM" id="SSF53335">
    <property type="entry name" value="S-adenosyl-L-methionine-dependent methyltransferases"/>
    <property type="match status" value="1"/>
</dbReference>
<reference key="1">
    <citation type="journal article" date="2004" name="Nat. Biotechnol.">
        <title>The genome sequence of the anaerobic, sulfate-reducing bacterium Desulfovibrio vulgaris Hildenborough.</title>
        <authorList>
            <person name="Heidelberg J.F."/>
            <person name="Seshadri R."/>
            <person name="Haveman S.A."/>
            <person name="Hemme C.L."/>
            <person name="Paulsen I.T."/>
            <person name="Kolonay J.F."/>
            <person name="Eisen J.A."/>
            <person name="Ward N.L."/>
            <person name="Methe B.A."/>
            <person name="Brinkac L.M."/>
            <person name="Daugherty S.C."/>
            <person name="DeBoy R.T."/>
            <person name="Dodson R.J."/>
            <person name="Durkin A.S."/>
            <person name="Madupu R."/>
            <person name="Nelson W.C."/>
            <person name="Sullivan S.A."/>
            <person name="Fouts D.E."/>
            <person name="Haft D.H."/>
            <person name="Selengut J."/>
            <person name="Peterson J.D."/>
            <person name="Davidsen T.M."/>
            <person name="Zafar N."/>
            <person name="Zhou L."/>
            <person name="Radune D."/>
            <person name="Dimitrov G."/>
            <person name="Hance M."/>
            <person name="Tran K."/>
            <person name="Khouri H.M."/>
            <person name="Gill J."/>
            <person name="Utterback T.R."/>
            <person name="Feldblyum T.V."/>
            <person name="Wall J.D."/>
            <person name="Voordouw G."/>
            <person name="Fraser C.M."/>
        </authorList>
    </citation>
    <scope>NUCLEOTIDE SEQUENCE [LARGE SCALE GENOMIC DNA]</scope>
    <source>
        <strain>ATCC 29579 / DSM 644 / CCUG 34227 / NCIMB 8303 / VKM B-1760 / Hildenborough</strain>
    </source>
</reference>
<organism>
    <name type="scientific">Nitratidesulfovibrio vulgaris (strain ATCC 29579 / DSM 644 / CCUG 34227 / NCIMB 8303 / VKM B-1760 / Hildenborough)</name>
    <name type="common">Desulfovibrio vulgaris</name>
    <dbReference type="NCBI Taxonomy" id="882"/>
    <lineage>
        <taxon>Bacteria</taxon>
        <taxon>Pseudomonadati</taxon>
        <taxon>Thermodesulfobacteriota</taxon>
        <taxon>Desulfovibrionia</taxon>
        <taxon>Desulfovibrionales</taxon>
        <taxon>Desulfovibrionaceae</taxon>
        <taxon>Nitratidesulfovibrio</taxon>
    </lineage>
</organism>
<accession>Q727D9</accession>
<proteinExistence type="inferred from homology"/>
<feature type="chain" id="PRO_0000414518" description="Release factor glutamine methyltransferase">
    <location>
        <begin position="1"/>
        <end position="295"/>
    </location>
</feature>
<feature type="binding site" evidence="1">
    <location>
        <begin position="127"/>
        <end position="131"/>
    </location>
    <ligand>
        <name>S-adenosyl-L-methionine</name>
        <dbReference type="ChEBI" id="CHEBI:59789"/>
    </ligand>
</feature>
<feature type="binding site" evidence="1">
    <location>
        <position position="150"/>
    </location>
    <ligand>
        <name>S-adenosyl-L-methionine</name>
        <dbReference type="ChEBI" id="CHEBI:59789"/>
    </ligand>
</feature>
<feature type="binding site" evidence="1">
    <location>
        <position position="179"/>
    </location>
    <ligand>
        <name>S-adenosyl-L-methionine</name>
        <dbReference type="ChEBI" id="CHEBI:59789"/>
    </ligand>
</feature>
<feature type="binding site" evidence="1">
    <location>
        <begin position="195"/>
        <end position="198"/>
    </location>
    <ligand>
        <name>substrate</name>
    </ligand>
</feature>
<feature type="binding site" evidence="1">
    <location>
        <position position="195"/>
    </location>
    <ligand>
        <name>S-adenosyl-L-methionine</name>
        <dbReference type="ChEBI" id="CHEBI:59789"/>
    </ligand>
</feature>
<evidence type="ECO:0000255" key="1">
    <source>
        <dbReference type="HAMAP-Rule" id="MF_02126"/>
    </source>
</evidence>